<evidence type="ECO:0000255" key="1"/>
<evidence type="ECO:0000269" key="2">
    <source>
    </source>
</evidence>
<evidence type="ECO:0000269" key="3">
    <source>
    </source>
</evidence>
<evidence type="ECO:0000305" key="4"/>
<organism>
    <name type="scientific">Drosophila melanogaster</name>
    <name type="common">Fruit fly</name>
    <dbReference type="NCBI Taxonomy" id="7227"/>
    <lineage>
        <taxon>Eukaryota</taxon>
        <taxon>Metazoa</taxon>
        <taxon>Ecdysozoa</taxon>
        <taxon>Arthropoda</taxon>
        <taxon>Hexapoda</taxon>
        <taxon>Insecta</taxon>
        <taxon>Pterygota</taxon>
        <taxon>Neoptera</taxon>
        <taxon>Endopterygota</taxon>
        <taxon>Diptera</taxon>
        <taxon>Brachycera</taxon>
        <taxon>Muscomorpha</taxon>
        <taxon>Ephydroidea</taxon>
        <taxon>Drosophilidae</taxon>
        <taxon>Drosophila</taxon>
        <taxon>Sophophora</taxon>
    </lineage>
</organism>
<reference key="1">
    <citation type="journal article" date="2000" name="Science">
        <title>The genome sequence of Drosophila melanogaster.</title>
        <authorList>
            <person name="Adams M.D."/>
            <person name="Celniker S.E."/>
            <person name="Holt R.A."/>
            <person name="Evans C.A."/>
            <person name="Gocayne J.D."/>
            <person name="Amanatides P.G."/>
            <person name="Scherer S.E."/>
            <person name="Li P.W."/>
            <person name="Hoskins R.A."/>
            <person name="Galle R.F."/>
            <person name="George R.A."/>
            <person name="Lewis S.E."/>
            <person name="Richards S."/>
            <person name="Ashburner M."/>
            <person name="Henderson S.N."/>
            <person name="Sutton G.G."/>
            <person name="Wortman J.R."/>
            <person name="Yandell M.D."/>
            <person name="Zhang Q."/>
            <person name="Chen L.X."/>
            <person name="Brandon R.C."/>
            <person name="Rogers Y.-H.C."/>
            <person name="Blazej R.G."/>
            <person name="Champe M."/>
            <person name="Pfeiffer B.D."/>
            <person name="Wan K.H."/>
            <person name="Doyle C."/>
            <person name="Baxter E.G."/>
            <person name="Helt G."/>
            <person name="Nelson C.R."/>
            <person name="Miklos G.L.G."/>
            <person name="Abril J.F."/>
            <person name="Agbayani A."/>
            <person name="An H.-J."/>
            <person name="Andrews-Pfannkoch C."/>
            <person name="Baldwin D."/>
            <person name="Ballew R.M."/>
            <person name="Basu A."/>
            <person name="Baxendale J."/>
            <person name="Bayraktaroglu L."/>
            <person name="Beasley E.M."/>
            <person name="Beeson K.Y."/>
            <person name="Benos P.V."/>
            <person name="Berman B.P."/>
            <person name="Bhandari D."/>
            <person name="Bolshakov S."/>
            <person name="Borkova D."/>
            <person name="Botchan M.R."/>
            <person name="Bouck J."/>
            <person name="Brokstein P."/>
            <person name="Brottier P."/>
            <person name="Burtis K.C."/>
            <person name="Busam D.A."/>
            <person name="Butler H."/>
            <person name="Cadieu E."/>
            <person name="Center A."/>
            <person name="Chandra I."/>
            <person name="Cherry J.M."/>
            <person name="Cawley S."/>
            <person name="Dahlke C."/>
            <person name="Davenport L.B."/>
            <person name="Davies P."/>
            <person name="de Pablos B."/>
            <person name="Delcher A."/>
            <person name="Deng Z."/>
            <person name="Mays A.D."/>
            <person name="Dew I."/>
            <person name="Dietz S.M."/>
            <person name="Dodson K."/>
            <person name="Doup L.E."/>
            <person name="Downes M."/>
            <person name="Dugan-Rocha S."/>
            <person name="Dunkov B.C."/>
            <person name="Dunn P."/>
            <person name="Durbin K.J."/>
            <person name="Evangelista C.C."/>
            <person name="Ferraz C."/>
            <person name="Ferriera S."/>
            <person name="Fleischmann W."/>
            <person name="Fosler C."/>
            <person name="Gabrielian A.E."/>
            <person name="Garg N.S."/>
            <person name="Gelbart W.M."/>
            <person name="Glasser K."/>
            <person name="Glodek A."/>
            <person name="Gong F."/>
            <person name="Gorrell J.H."/>
            <person name="Gu Z."/>
            <person name="Guan P."/>
            <person name="Harris M."/>
            <person name="Harris N.L."/>
            <person name="Harvey D.A."/>
            <person name="Heiman T.J."/>
            <person name="Hernandez J.R."/>
            <person name="Houck J."/>
            <person name="Hostin D."/>
            <person name="Houston K.A."/>
            <person name="Howland T.J."/>
            <person name="Wei M.-H."/>
            <person name="Ibegwam C."/>
            <person name="Jalali M."/>
            <person name="Kalush F."/>
            <person name="Karpen G.H."/>
            <person name="Ke Z."/>
            <person name="Kennison J.A."/>
            <person name="Ketchum K.A."/>
            <person name="Kimmel B.E."/>
            <person name="Kodira C.D."/>
            <person name="Kraft C.L."/>
            <person name="Kravitz S."/>
            <person name="Kulp D."/>
            <person name="Lai Z."/>
            <person name="Lasko P."/>
            <person name="Lei Y."/>
            <person name="Levitsky A.A."/>
            <person name="Li J.H."/>
            <person name="Li Z."/>
            <person name="Liang Y."/>
            <person name="Lin X."/>
            <person name="Liu X."/>
            <person name="Mattei B."/>
            <person name="McIntosh T.C."/>
            <person name="McLeod M.P."/>
            <person name="McPherson D."/>
            <person name="Merkulov G."/>
            <person name="Milshina N.V."/>
            <person name="Mobarry C."/>
            <person name="Morris J."/>
            <person name="Moshrefi A."/>
            <person name="Mount S.M."/>
            <person name="Moy M."/>
            <person name="Murphy B."/>
            <person name="Murphy L."/>
            <person name="Muzny D.M."/>
            <person name="Nelson D.L."/>
            <person name="Nelson D.R."/>
            <person name="Nelson K.A."/>
            <person name="Nixon K."/>
            <person name="Nusskern D.R."/>
            <person name="Pacleb J.M."/>
            <person name="Palazzolo M."/>
            <person name="Pittman G.S."/>
            <person name="Pan S."/>
            <person name="Pollard J."/>
            <person name="Puri V."/>
            <person name="Reese M.G."/>
            <person name="Reinert K."/>
            <person name="Remington K."/>
            <person name="Saunders R.D.C."/>
            <person name="Scheeler F."/>
            <person name="Shen H."/>
            <person name="Shue B.C."/>
            <person name="Siden-Kiamos I."/>
            <person name="Simpson M."/>
            <person name="Skupski M.P."/>
            <person name="Smith T.J."/>
            <person name="Spier E."/>
            <person name="Spradling A.C."/>
            <person name="Stapleton M."/>
            <person name="Strong R."/>
            <person name="Sun E."/>
            <person name="Svirskas R."/>
            <person name="Tector C."/>
            <person name="Turner R."/>
            <person name="Venter E."/>
            <person name="Wang A.H."/>
            <person name="Wang X."/>
            <person name="Wang Z.-Y."/>
            <person name="Wassarman D.A."/>
            <person name="Weinstock G.M."/>
            <person name="Weissenbach J."/>
            <person name="Williams S.M."/>
            <person name="Woodage T."/>
            <person name="Worley K.C."/>
            <person name="Wu D."/>
            <person name="Yang S."/>
            <person name="Yao Q.A."/>
            <person name="Ye J."/>
            <person name="Yeh R.-F."/>
            <person name="Zaveri J.S."/>
            <person name="Zhan M."/>
            <person name="Zhang G."/>
            <person name="Zhao Q."/>
            <person name="Zheng L."/>
            <person name="Zheng X.H."/>
            <person name="Zhong F.N."/>
            <person name="Zhong W."/>
            <person name="Zhou X."/>
            <person name="Zhu S.C."/>
            <person name="Zhu X."/>
            <person name="Smith H.O."/>
            <person name="Gibbs R.A."/>
            <person name="Myers E.W."/>
            <person name="Rubin G.M."/>
            <person name="Venter J.C."/>
        </authorList>
    </citation>
    <scope>NUCLEOTIDE SEQUENCE [LARGE SCALE GENOMIC DNA]</scope>
    <source>
        <strain>Berkeley</strain>
    </source>
</reference>
<reference key="2">
    <citation type="journal article" date="2002" name="Genome Biol.">
        <title>Annotation of the Drosophila melanogaster euchromatic genome: a systematic review.</title>
        <authorList>
            <person name="Misra S."/>
            <person name="Crosby M.A."/>
            <person name="Mungall C.J."/>
            <person name="Matthews B.B."/>
            <person name="Campbell K.S."/>
            <person name="Hradecky P."/>
            <person name="Huang Y."/>
            <person name="Kaminker J.S."/>
            <person name="Millburn G.H."/>
            <person name="Prochnik S.E."/>
            <person name="Smith C.D."/>
            <person name="Tupy J.L."/>
            <person name="Whitfield E.J."/>
            <person name="Bayraktaroglu L."/>
            <person name="Berman B.P."/>
            <person name="Bettencourt B.R."/>
            <person name="Celniker S.E."/>
            <person name="de Grey A.D.N.J."/>
            <person name="Drysdale R.A."/>
            <person name="Harris N.L."/>
            <person name="Richter J."/>
            <person name="Russo S."/>
            <person name="Schroeder A.J."/>
            <person name="Shu S.Q."/>
            <person name="Stapleton M."/>
            <person name="Yamada C."/>
            <person name="Ashburner M."/>
            <person name="Gelbart W.M."/>
            <person name="Rubin G.M."/>
            <person name="Lewis S.E."/>
        </authorList>
    </citation>
    <scope>GENOME REANNOTATION</scope>
    <source>
        <strain>Berkeley</strain>
    </source>
</reference>
<reference key="3">
    <citation type="journal article" date="2002" name="Genome Biol.">
        <title>A Drosophila full-length cDNA resource.</title>
        <authorList>
            <person name="Stapleton M."/>
            <person name="Carlson J.W."/>
            <person name="Brokstein P."/>
            <person name="Yu C."/>
            <person name="Champe M."/>
            <person name="George R.A."/>
            <person name="Guarin H."/>
            <person name="Kronmiller B."/>
            <person name="Pacleb J.M."/>
            <person name="Park S."/>
            <person name="Wan K.H."/>
            <person name="Rubin G.M."/>
            <person name="Celniker S.E."/>
        </authorList>
    </citation>
    <scope>NUCLEOTIDE SEQUENCE [LARGE SCALE MRNA]</scope>
    <source>
        <strain>Berkeley</strain>
        <tissue>Embryo</tissue>
    </source>
</reference>
<reference key="4">
    <citation type="journal article" date="2012" name="Mol. Cell. Biol.">
        <title>LST8 regulates cell growth via target-of-rapamycin complex 2 (TORC2).</title>
        <authorList>
            <person name="Wang T."/>
            <person name="Blumhagen R."/>
            <person name="Lao U."/>
            <person name="Kuo Y."/>
            <person name="Edgar B.A."/>
        </authorList>
    </citation>
    <scope>FUNCTION</scope>
    <scope>INTERACTION WITH MTOR</scope>
    <scope>DISRUPTION PHENOTYPE</scope>
</reference>
<reference key="5">
    <citation type="journal article" date="2015" name="Sci. Rep.">
        <title>Target of Rapamycin Complex 2 regulates cell growth via Myc in Drosophila.</title>
        <authorList>
            <person name="Kuo Y."/>
            <person name="Huang H."/>
            <person name="Cai T."/>
            <person name="Wang T."/>
        </authorList>
    </citation>
    <scope>FUNCTION</scope>
    <scope>DISRUPTION PHENOTYPE</scope>
</reference>
<gene>
    <name type="primary">Lst8</name>
    <name type="ORF">CG3004</name>
</gene>
<dbReference type="EMBL" id="AE014298">
    <property type="protein sequence ID" value="AAF46509.2"/>
    <property type="molecule type" value="Genomic_DNA"/>
</dbReference>
<dbReference type="EMBL" id="AY061311">
    <property type="protein sequence ID" value="AAL28859.1"/>
    <property type="molecule type" value="mRNA"/>
</dbReference>
<dbReference type="RefSeq" id="NP_572572.1">
    <property type="nucleotide sequence ID" value="NM_132344.4"/>
</dbReference>
<dbReference type="SMR" id="Q9W328"/>
<dbReference type="BioGRID" id="58343">
    <property type="interactions" value="40"/>
</dbReference>
<dbReference type="ComplexPortal" id="CPX-2265">
    <property type="entry name" value="TORC1 complex"/>
</dbReference>
<dbReference type="ComplexPortal" id="CPX-2269">
    <property type="entry name" value="TORC2 complex"/>
</dbReference>
<dbReference type="FunCoup" id="Q9W328">
    <property type="interactions" value="1121"/>
</dbReference>
<dbReference type="IntAct" id="Q9W328">
    <property type="interactions" value="30"/>
</dbReference>
<dbReference type="STRING" id="7227.FBpp0071303"/>
<dbReference type="PaxDb" id="7227-FBpp0071303"/>
<dbReference type="DNASU" id="31903"/>
<dbReference type="EnsemblMetazoa" id="FBtr0071368">
    <property type="protein sequence ID" value="FBpp0071303"/>
    <property type="gene ID" value="FBgn0264691"/>
</dbReference>
<dbReference type="GeneID" id="31903"/>
<dbReference type="KEGG" id="dme:Dmel_CG3004"/>
<dbReference type="UCSC" id="CG3004-RA">
    <property type="organism name" value="d. melanogaster"/>
</dbReference>
<dbReference type="AGR" id="FB:FBgn0264691"/>
<dbReference type="CTD" id="31903"/>
<dbReference type="FlyBase" id="FBgn0264691">
    <property type="gene designation" value="Lst8"/>
</dbReference>
<dbReference type="VEuPathDB" id="VectorBase:FBgn0264691"/>
<dbReference type="eggNOG" id="KOG0315">
    <property type="taxonomic scope" value="Eukaryota"/>
</dbReference>
<dbReference type="GeneTree" id="ENSGT00390000014795"/>
<dbReference type="HOGENOM" id="CLU_000288_57_5_1"/>
<dbReference type="InParanoid" id="Q9W328"/>
<dbReference type="OMA" id="VQRNYKH"/>
<dbReference type="OrthoDB" id="400at2759"/>
<dbReference type="PhylomeDB" id="Q9W328"/>
<dbReference type="Reactome" id="R-DME-1257604">
    <property type="pathway name" value="PIP3 activates AKT signaling"/>
</dbReference>
<dbReference type="Reactome" id="R-DME-1632852">
    <property type="pathway name" value="Macroautophagy"/>
</dbReference>
<dbReference type="Reactome" id="R-DME-165159">
    <property type="pathway name" value="MTOR signalling"/>
</dbReference>
<dbReference type="Reactome" id="R-DME-166208">
    <property type="pathway name" value="mTORC1-mediated signalling"/>
</dbReference>
<dbReference type="Reactome" id="R-DME-3371571">
    <property type="pathway name" value="HSF1-dependent transactivation"/>
</dbReference>
<dbReference type="Reactome" id="R-DME-380972">
    <property type="pathway name" value="Energy dependent regulation of mTOR by LKB1-AMPK"/>
</dbReference>
<dbReference type="Reactome" id="R-DME-389357">
    <property type="pathway name" value="CD28 dependent PI3K/Akt signaling"/>
</dbReference>
<dbReference type="Reactome" id="R-DME-5218920">
    <property type="pathway name" value="VEGFR2 mediated vascular permeability"/>
</dbReference>
<dbReference type="Reactome" id="R-DME-5628897">
    <property type="pathway name" value="TP53 Regulates Metabolic Genes"/>
</dbReference>
<dbReference type="Reactome" id="R-DME-8943724">
    <property type="pathway name" value="Regulation of PTEN gene transcription"/>
</dbReference>
<dbReference type="Reactome" id="R-DME-9639288">
    <property type="pathway name" value="Amino acids regulate mTORC1"/>
</dbReference>
<dbReference type="Reactome" id="R-DME-9856530">
    <property type="pathway name" value="High laminar flow shear stress activates signaling by PIEZO1 and PECAM1:CDH5:KDR in endothelial cells"/>
</dbReference>
<dbReference type="SignaLink" id="Q9W328"/>
<dbReference type="BioGRID-ORCS" id="31903">
    <property type="hits" value="0 hits in 1 CRISPR screen"/>
</dbReference>
<dbReference type="GenomeRNAi" id="31903"/>
<dbReference type="PRO" id="PR:Q9W328"/>
<dbReference type="Proteomes" id="UP000000803">
    <property type="component" value="Chromosome X"/>
</dbReference>
<dbReference type="Bgee" id="FBgn0264691">
    <property type="expression patterns" value="Expressed in wing disc and 61 other cell types or tissues"/>
</dbReference>
<dbReference type="ExpressionAtlas" id="Q9W328">
    <property type="expression patterns" value="baseline and differential"/>
</dbReference>
<dbReference type="GO" id="GO:0005737">
    <property type="term" value="C:cytoplasm"/>
    <property type="evidence" value="ECO:0000250"/>
    <property type="project" value="UniProtKB"/>
</dbReference>
<dbReference type="GO" id="GO:0031932">
    <property type="term" value="C:TORC2 complex"/>
    <property type="evidence" value="ECO:0000314"/>
    <property type="project" value="UniProtKB"/>
</dbReference>
<dbReference type="GO" id="GO:0045793">
    <property type="term" value="P:positive regulation of cell size"/>
    <property type="evidence" value="ECO:0000315"/>
    <property type="project" value="UniProtKB"/>
</dbReference>
<dbReference type="GO" id="GO:0046628">
    <property type="term" value="P:positive regulation of insulin receptor signaling pathway"/>
    <property type="evidence" value="ECO:0000315"/>
    <property type="project" value="FlyBase"/>
</dbReference>
<dbReference type="GO" id="GO:0051897">
    <property type="term" value="P:positive regulation of phosphatidylinositol 3-kinase/protein kinase B signal transduction"/>
    <property type="evidence" value="ECO:0000315"/>
    <property type="project" value="FlyBase"/>
</dbReference>
<dbReference type="GO" id="GO:0061586">
    <property type="term" value="P:positive regulation of transcription by transcription factor localization"/>
    <property type="evidence" value="ECO:0000353"/>
    <property type="project" value="UniProtKB"/>
</dbReference>
<dbReference type="GO" id="GO:0034504">
    <property type="term" value="P:protein localization to nucleus"/>
    <property type="evidence" value="ECO:0000353"/>
    <property type="project" value="UniProtKB"/>
</dbReference>
<dbReference type="GO" id="GO:0032956">
    <property type="term" value="P:regulation of actin cytoskeleton organization"/>
    <property type="evidence" value="ECO:0000318"/>
    <property type="project" value="GO_Central"/>
</dbReference>
<dbReference type="GO" id="GO:0031929">
    <property type="term" value="P:TOR signaling"/>
    <property type="evidence" value="ECO:0000318"/>
    <property type="project" value="GO_Central"/>
</dbReference>
<dbReference type="GO" id="GO:0038203">
    <property type="term" value="P:TORC2 signaling"/>
    <property type="evidence" value="ECO:0000315"/>
    <property type="project" value="UniProtKB"/>
</dbReference>
<dbReference type="CDD" id="cd00200">
    <property type="entry name" value="WD40"/>
    <property type="match status" value="1"/>
</dbReference>
<dbReference type="FunFam" id="2.130.10.10:FF:000505">
    <property type="entry name" value="Blast:Protein LST8 homolog"/>
    <property type="match status" value="1"/>
</dbReference>
<dbReference type="Gene3D" id="2.130.10.10">
    <property type="entry name" value="YVTN repeat-like/Quinoprotein amine dehydrogenase"/>
    <property type="match status" value="1"/>
</dbReference>
<dbReference type="InterPro" id="IPR055442">
    <property type="entry name" value="Beta-prop_EML-like_2nd"/>
</dbReference>
<dbReference type="InterPro" id="IPR020472">
    <property type="entry name" value="G-protein_beta_WD-40_rep"/>
</dbReference>
<dbReference type="InterPro" id="IPR037588">
    <property type="entry name" value="MLST8"/>
</dbReference>
<dbReference type="InterPro" id="IPR015943">
    <property type="entry name" value="WD40/YVTN_repeat-like_dom_sf"/>
</dbReference>
<dbReference type="InterPro" id="IPR019775">
    <property type="entry name" value="WD40_repeat_CS"/>
</dbReference>
<dbReference type="InterPro" id="IPR036322">
    <property type="entry name" value="WD40_repeat_dom_sf"/>
</dbReference>
<dbReference type="InterPro" id="IPR001680">
    <property type="entry name" value="WD40_rpt"/>
</dbReference>
<dbReference type="PANTHER" id="PTHR19842">
    <property type="entry name" value="G BETA-LIKE PROTEIN GBL"/>
    <property type="match status" value="1"/>
</dbReference>
<dbReference type="PANTHER" id="PTHR19842:SF0">
    <property type="entry name" value="TARGET OF RAPAMYCIN COMPLEX SUBUNIT LST8"/>
    <property type="match status" value="1"/>
</dbReference>
<dbReference type="Pfam" id="PF23414">
    <property type="entry name" value="Beta-prop_EML_2"/>
    <property type="match status" value="1"/>
</dbReference>
<dbReference type="Pfam" id="PF00400">
    <property type="entry name" value="WD40"/>
    <property type="match status" value="2"/>
</dbReference>
<dbReference type="PRINTS" id="PR00320">
    <property type="entry name" value="GPROTEINBRPT"/>
</dbReference>
<dbReference type="SMART" id="SM00320">
    <property type="entry name" value="WD40"/>
    <property type="match status" value="6"/>
</dbReference>
<dbReference type="SUPFAM" id="SSF50978">
    <property type="entry name" value="WD40 repeat-like"/>
    <property type="match status" value="1"/>
</dbReference>
<dbReference type="PROSITE" id="PS00678">
    <property type="entry name" value="WD_REPEATS_1"/>
    <property type="match status" value="2"/>
</dbReference>
<dbReference type="PROSITE" id="PS50082">
    <property type="entry name" value="WD_REPEATS_2"/>
    <property type="match status" value="5"/>
</dbReference>
<dbReference type="PROSITE" id="PS50294">
    <property type="entry name" value="WD_REPEATS_REGION"/>
    <property type="match status" value="1"/>
</dbReference>
<proteinExistence type="evidence at protein level"/>
<keyword id="KW-0963">Cytoplasm</keyword>
<keyword id="KW-1185">Reference proteome</keyword>
<keyword id="KW-0677">Repeat</keyword>
<keyword id="KW-0853">WD repeat</keyword>
<name>LST8_DROME</name>
<sequence length="313" mass="35347">MGDQQQLILATGGYDHTIKVWQAHTGNCIKTMRFVETSQVNALDRTPDKTRLAACGYQCIRLYDLESNCTAPVINFDGVQKNVTRLGFQEDGNWMFTAGEDHHVRIWDMIAAPPHCSRIFDCEAPVNAACLHPNQVEIAMGSQNGSVFLWDVKSERHERIVPEVDASIQDVAISPDGRYLAAANNKGNCYIWSLTSQDQKMSTLRPNRKIPAHSRYILRCKFSPDSRLLLTTSGDGTVCIWKTDDFSKWRELCIENYWVWDAAFSADSKWLFTASSDGIARLWKLQTKSSIRDYTGHTKAITALSFKDEIVGK</sequence>
<comment type="function">
    <text evidence="2 3">Subunit of TORC1 and TORC2, which regulate cell growth and survival in response to nutrient and hormonal signals (PubMed:22493059, PubMed:25999153). Essential for TORC2-mediated regulation of cell growth and phosphorylation of Akt1 (PubMed:22493059, PubMed:25999153). However it is not required for TORC1-mediated functions such as TORC1-dependent regulation of cell growth, autophagy and phosphorylation of S6K (PubMed:22493059).</text>
</comment>
<comment type="subunit">
    <text evidence="2">Part of a minimal complex, TORC1, consisting of mTor, raptor and lst8. Interacts with mTor but not raptor. Does not require raptor for binding to mTor. Part of a minimal complex, TORC2, consisting of mTor, rictor and lst8.</text>
</comment>
<comment type="interaction">
    <interactant intactId="EBI-115381">
        <id>Q9W328</id>
    </interactant>
    <interactant intactId="EBI-84891">
        <id>Q9VQ93</id>
        <label>sau</label>
    </interactant>
    <organismsDiffer>false</organismsDiffer>
    <experiments>2</experiments>
</comment>
<comment type="subcellular location">
    <subcellularLocation>
        <location evidence="4">Cytoplasm</location>
    </subcellularLocation>
</comment>
<comment type="disruption phenotype">
    <text evidence="2 3">Reduced tissue growth (PubMed:22493059, PubMed:25999153). Adults display an overall reduction in size with a 25% reduction in body weight, and have smaller wings and eyes (PubMed:22493059, PubMed:25999153). Reduced phosphorylation of Akt1 which is a direct target of the TORC2 complex but no effect on the phosphorylation of SK6 which is a major target of the TORC1 complex (PubMed:22493059).</text>
</comment>
<comment type="similarity">
    <text evidence="4">Belongs to the WD repeat LST8 family.</text>
</comment>
<protein>
    <recommendedName>
        <fullName>Protein LST8 homolog</fullName>
    </recommendedName>
</protein>
<feature type="chain" id="PRO_0000326505" description="Protein LST8 homolog">
    <location>
        <begin position="1"/>
        <end position="313"/>
    </location>
</feature>
<feature type="repeat" description="WD 1" evidence="1">
    <location>
        <begin position="1"/>
        <end position="33"/>
    </location>
</feature>
<feature type="repeat" description="WD 2" evidence="1">
    <location>
        <begin position="35"/>
        <end position="73"/>
    </location>
</feature>
<feature type="repeat" description="WD 3" evidence="1">
    <location>
        <begin position="78"/>
        <end position="117"/>
    </location>
</feature>
<feature type="repeat" description="WD 4" evidence="1">
    <location>
        <begin position="121"/>
        <end position="160"/>
    </location>
</feature>
<feature type="repeat" description="WD 5" evidence="1">
    <location>
        <begin position="163"/>
        <end position="202"/>
    </location>
</feature>
<feature type="repeat" description="WD 6" evidence="1">
    <location>
        <begin position="212"/>
        <end position="251"/>
    </location>
</feature>
<feature type="repeat" description="WD 7" evidence="1">
    <location>
        <begin position="254"/>
        <end position="293"/>
    </location>
</feature>
<feature type="repeat" description="WD 8" evidence="1">
    <location>
        <begin position="296"/>
        <end position="313"/>
    </location>
</feature>
<accession>Q9W328</accession>
<accession>Q95RK5</accession>